<dbReference type="EMBL" id="CP001219">
    <property type="protein sequence ID" value="ACK78639.1"/>
    <property type="molecule type" value="Genomic_DNA"/>
</dbReference>
<dbReference type="RefSeq" id="WP_009561407.1">
    <property type="nucleotide sequence ID" value="NC_011761.1"/>
</dbReference>
<dbReference type="STRING" id="243159.AFE_0667"/>
<dbReference type="PaxDb" id="243159-AFE_0667"/>
<dbReference type="GeneID" id="65280018"/>
<dbReference type="KEGG" id="afr:AFE_0667"/>
<dbReference type="eggNOG" id="COG2917">
    <property type="taxonomic scope" value="Bacteria"/>
</dbReference>
<dbReference type="HOGENOM" id="CLU_089554_2_0_6"/>
<dbReference type="Proteomes" id="UP000001362">
    <property type="component" value="Chromosome"/>
</dbReference>
<dbReference type="GO" id="GO:0005886">
    <property type="term" value="C:plasma membrane"/>
    <property type="evidence" value="ECO:0007669"/>
    <property type="project" value="UniProtKB-SubCell"/>
</dbReference>
<dbReference type="HAMAP" id="MF_00189">
    <property type="entry name" value="YciB"/>
    <property type="match status" value="1"/>
</dbReference>
<dbReference type="InterPro" id="IPR006008">
    <property type="entry name" value="YciB"/>
</dbReference>
<dbReference type="NCBIfam" id="TIGR00997">
    <property type="entry name" value="ispZ"/>
    <property type="match status" value="1"/>
</dbReference>
<dbReference type="NCBIfam" id="NF001325">
    <property type="entry name" value="PRK00259.1-3"/>
    <property type="match status" value="1"/>
</dbReference>
<dbReference type="PANTHER" id="PTHR36917:SF1">
    <property type="entry name" value="INNER MEMBRANE-SPANNING PROTEIN YCIB"/>
    <property type="match status" value="1"/>
</dbReference>
<dbReference type="PANTHER" id="PTHR36917">
    <property type="entry name" value="INTRACELLULAR SEPTATION PROTEIN A-RELATED"/>
    <property type="match status" value="1"/>
</dbReference>
<dbReference type="Pfam" id="PF04279">
    <property type="entry name" value="IspA"/>
    <property type="match status" value="1"/>
</dbReference>
<evidence type="ECO:0000255" key="1">
    <source>
        <dbReference type="HAMAP-Rule" id="MF_00189"/>
    </source>
</evidence>
<proteinExistence type="inferred from homology"/>
<organism>
    <name type="scientific">Acidithiobacillus ferrooxidans (strain ATCC 23270 / DSM 14882 / CIP 104768 / NCIMB 8455)</name>
    <name type="common">Ferrobacillus ferrooxidans (strain ATCC 23270)</name>
    <dbReference type="NCBI Taxonomy" id="243159"/>
    <lineage>
        <taxon>Bacteria</taxon>
        <taxon>Pseudomonadati</taxon>
        <taxon>Pseudomonadota</taxon>
        <taxon>Acidithiobacillia</taxon>
        <taxon>Acidithiobacillales</taxon>
        <taxon>Acidithiobacillaceae</taxon>
        <taxon>Acidithiobacillus</taxon>
    </lineage>
</organism>
<comment type="function">
    <text evidence="1">Plays a role in cell envelope biogenesis, maintenance of cell envelope integrity and membrane homeostasis.</text>
</comment>
<comment type="subcellular location">
    <subcellularLocation>
        <location evidence="1">Cell inner membrane</location>
        <topology evidence="1">Multi-pass membrane protein</topology>
    </subcellularLocation>
</comment>
<comment type="similarity">
    <text evidence="1">Belongs to the YciB family.</text>
</comment>
<gene>
    <name evidence="1" type="primary">yciB</name>
    <name type="ordered locus">AFE_0667</name>
</gene>
<sequence>MKLLTDFLPIILFFVAYRIHGIYTATEVLIVAAILLMAWQWWRRGRVETMTWVSTLLILTFGGLTLYFHNDTFIKIKPSILYVLFAAALLFTHWREEPLLQRLMGGQLPAALPLSFWRRLNGYWIAFFLFGAVLNLIVAYAFSTGIWVDFKLFGMLAITVIFVLFQAVVISRALPQEAKDGDSSA</sequence>
<keyword id="KW-0997">Cell inner membrane</keyword>
<keyword id="KW-1003">Cell membrane</keyword>
<keyword id="KW-0472">Membrane</keyword>
<keyword id="KW-1185">Reference proteome</keyword>
<keyword id="KW-0812">Transmembrane</keyword>
<keyword id="KW-1133">Transmembrane helix</keyword>
<accession>B7J5W3</accession>
<name>YCIB_ACIF2</name>
<feature type="chain" id="PRO_1000118577" description="Inner membrane-spanning protein YciB">
    <location>
        <begin position="1"/>
        <end position="185"/>
    </location>
</feature>
<feature type="transmembrane region" description="Helical" evidence="1">
    <location>
        <begin position="19"/>
        <end position="39"/>
    </location>
</feature>
<feature type="transmembrane region" description="Helical" evidence="1">
    <location>
        <begin position="49"/>
        <end position="69"/>
    </location>
</feature>
<feature type="transmembrane region" description="Helical" evidence="1">
    <location>
        <begin position="72"/>
        <end position="92"/>
    </location>
</feature>
<feature type="transmembrane region" description="Helical" evidence="1">
    <location>
        <begin position="122"/>
        <end position="142"/>
    </location>
</feature>
<feature type="transmembrane region" description="Helical" evidence="1">
    <location>
        <begin position="150"/>
        <end position="170"/>
    </location>
</feature>
<protein>
    <recommendedName>
        <fullName evidence="1">Inner membrane-spanning protein YciB</fullName>
    </recommendedName>
</protein>
<reference key="1">
    <citation type="journal article" date="2008" name="BMC Genomics">
        <title>Acidithiobacillus ferrooxidans metabolism: from genome sequence to industrial applications.</title>
        <authorList>
            <person name="Valdes J."/>
            <person name="Pedroso I."/>
            <person name="Quatrini R."/>
            <person name="Dodson R.J."/>
            <person name="Tettelin H."/>
            <person name="Blake R. II"/>
            <person name="Eisen J.A."/>
            <person name="Holmes D.S."/>
        </authorList>
    </citation>
    <scope>NUCLEOTIDE SEQUENCE [LARGE SCALE GENOMIC DNA]</scope>
    <source>
        <strain>ATCC 23270 / DSM 14882 / CIP 104768 / NCIMB 8455</strain>
    </source>
</reference>